<proteinExistence type="inferred from homology"/>
<keyword id="KW-0963">Cytoplasm</keyword>
<keyword id="KW-0501">Molybdenum cofactor biosynthesis</keyword>
<keyword id="KW-1185">Reference proteome</keyword>
<reference key="1">
    <citation type="journal article" date="2003" name="Nat. Biotechnol.">
        <title>The genome sequence of the entomopathogenic bacterium Photorhabdus luminescens.</title>
        <authorList>
            <person name="Duchaud E."/>
            <person name="Rusniok C."/>
            <person name="Frangeul L."/>
            <person name="Buchrieser C."/>
            <person name="Givaudan A."/>
            <person name="Taourit S."/>
            <person name="Bocs S."/>
            <person name="Boursaux-Eude C."/>
            <person name="Chandler M."/>
            <person name="Charles J.-F."/>
            <person name="Dassa E."/>
            <person name="Derose R."/>
            <person name="Derzelle S."/>
            <person name="Freyssinet G."/>
            <person name="Gaudriault S."/>
            <person name="Medigue C."/>
            <person name="Lanois A."/>
            <person name="Powell K."/>
            <person name="Siguier P."/>
            <person name="Vincent R."/>
            <person name="Wingate V."/>
            <person name="Zouine M."/>
            <person name="Glaser P."/>
            <person name="Boemare N."/>
            <person name="Danchin A."/>
            <person name="Kunst F."/>
        </authorList>
    </citation>
    <scope>NUCLEOTIDE SEQUENCE [LARGE SCALE GENOMIC DNA]</scope>
    <source>
        <strain>DSM 15139 / CIP 105565 / TT01</strain>
    </source>
</reference>
<feature type="chain" id="PRO_0000152915" description="Sulfur carrier protein FdhD">
    <location>
        <begin position="1"/>
        <end position="276"/>
    </location>
</feature>
<feature type="active site" description="Cysteine persulfide intermediate" evidence="1">
    <location>
        <position position="122"/>
    </location>
</feature>
<feature type="binding site" evidence="1">
    <location>
        <begin position="259"/>
        <end position="264"/>
    </location>
    <ligand>
        <name>Mo-bis(molybdopterin guanine dinucleotide)</name>
        <dbReference type="ChEBI" id="CHEBI:60539"/>
    </ligand>
</feature>
<protein>
    <recommendedName>
        <fullName evidence="1">Sulfur carrier protein FdhD</fullName>
    </recommendedName>
</protein>
<organism>
    <name type="scientific">Photorhabdus laumondii subsp. laumondii (strain DSM 15139 / CIP 105565 / TT01)</name>
    <name type="common">Photorhabdus luminescens subsp. laumondii</name>
    <dbReference type="NCBI Taxonomy" id="243265"/>
    <lineage>
        <taxon>Bacteria</taxon>
        <taxon>Pseudomonadati</taxon>
        <taxon>Pseudomonadota</taxon>
        <taxon>Gammaproteobacteria</taxon>
        <taxon>Enterobacterales</taxon>
        <taxon>Morganellaceae</taxon>
        <taxon>Photorhabdus</taxon>
    </lineage>
</organism>
<name>FDHD_PHOLL</name>
<dbReference type="EMBL" id="BX571875">
    <property type="protein sequence ID" value="CAE17257.1"/>
    <property type="molecule type" value="Genomic_DNA"/>
</dbReference>
<dbReference type="RefSeq" id="WP_011148941.1">
    <property type="nucleotide sequence ID" value="NC_005126.1"/>
</dbReference>
<dbReference type="SMR" id="Q7MY11"/>
<dbReference type="STRING" id="243265.plu4885"/>
<dbReference type="GeneID" id="48851113"/>
<dbReference type="KEGG" id="plu:plu4885"/>
<dbReference type="eggNOG" id="COG1526">
    <property type="taxonomic scope" value="Bacteria"/>
</dbReference>
<dbReference type="HOGENOM" id="CLU_056887_2_0_6"/>
<dbReference type="OrthoDB" id="3197277at2"/>
<dbReference type="Proteomes" id="UP000002514">
    <property type="component" value="Chromosome"/>
</dbReference>
<dbReference type="GO" id="GO:0005737">
    <property type="term" value="C:cytoplasm"/>
    <property type="evidence" value="ECO:0007669"/>
    <property type="project" value="UniProtKB-SubCell"/>
</dbReference>
<dbReference type="GO" id="GO:0097163">
    <property type="term" value="F:sulfur carrier activity"/>
    <property type="evidence" value="ECO:0007669"/>
    <property type="project" value="UniProtKB-UniRule"/>
</dbReference>
<dbReference type="GO" id="GO:0016783">
    <property type="term" value="F:sulfurtransferase activity"/>
    <property type="evidence" value="ECO:0007669"/>
    <property type="project" value="InterPro"/>
</dbReference>
<dbReference type="GO" id="GO:0006777">
    <property type="term" value="P:Mo-molybdopterin cofactor biosynthetic process"/>
    <property type="evidence" value="ECO:0007669"/>
    <property type="project" value="UniProtKB-UniRule"/>
</dbReference>
<dbReference type="Gene3D" id="3.10.20.10">
    <property type="match status" value="1"/>
</dbReference>
<dbReference type="Gene3D" id="3.40.140.10">
    <property type="entry name" value="Cytidine Deaminase, domain 2"/>
    <property type="match status" value="1"/>
</dbReference>
<dbReference type="HAMAP" id="MF_00187">
    <property type="entry name" value="FdhD"/>
    <property type="match status" value="1"/>
</dbReference>
<dbReference type="InterPro" id="IPR016193">
    <property type="entry name" value="Cytidine_deaminase-like"/>
</dbReference>
<dbReference type="InterPro" id="IPR003786">
    <property type="entry name" value="FdhD"/>
</dbReference>
<dbReference type="NCBIfam" id="TIGR00129">
    <property type="entry name" value="fdhD_narQ"/>
    <property type="match status" value="1"/>
</dbReference>
<dbReference type="PANTHER" id="PTHR30592">
    <property type="entry name" value="FORMATE DEHYDROGENASE"/>
    <property type="match status" value="1"/>
</dbReference>
<dbReference type="PANTHER" id="PTHR30592:SF1">
    <property type="entry name" value="SULFUR CARRIER PROTEIN FDHD"/>
    <property type="match status" value="1"/>
</dbReference>
<dbReference type="Pfam" id="PF02634">
    <property type="entry name" value="FdhD-NarQ"/>
    <property type="match status" value="1"/>
</dbReference>
<dbReference type="PIRSF" id="PIRSF015626">
    <property type="entry name" value="FdhD"/>
    <property type="match status" value="1"/>
</dbReference>
<dbReference type="SUPFAM" id="SSF53927">
    <property type="entry name" value="Cytidine deaminase-like"/>
    <property type="match status" value="1"/>
</dbReference>
<comment type="function">
    <text evidence="1">Required for formate dehydrogenase (FDH) activity. Acts as a sulfur carrier protein that transfers sulfur from IscS to the molybdenum cofactor prior to its insertion into FDH.</text>
</comment>
<comment type="subcellular location">
    <subcellularLocation>
        <location evidence="1">Cytoplasm</location>
    </subcellularLocation>
</comment>
<comment type="similarity">
    <text evidence="1">Belongs to the FdhD family.</text>
</comment>
<gene>
    <name evidence="1" type="primary">fdhD</name>
    <name type="ordered locus">plu4885</name>
</gene>
<accession>Q7MY11</accession>
<evidence type="ECO:0000255" key="1">
    <source>
        <dbReference type="HAMAP-Rule" id="MF_00187"/>
    </source>
</evidence>
<sequence>MYNVKSGKLLPFGVIEGVTRTNVQQKHHFDTLKVDWIAEEVPVALVYNGISHVVMMASPKDLEYFAIGFSLSEGIIESQHEIRSIDIVAHCRGGIELQIELSSRRFAGLKERRRNLAGRTGCGICGAEQLSDIFRPISPLPFTQTFSLNQLDYALSQLTSVQDVGALTGCTHAAGWINPEGKLLGGCEDVGRHVALDKMLGMKAKTGWQQGAVLVSSRASYEMVQKSAICGVEILLAVSAATSLAVEIADRCHLTLVGFCKPGKATIYTHAERLIS</sequence>